<comment type="function">
    <text evidence="1">May control the interaction of photosystem II (PSII) cores with the light-harvesting antenna, regulates electron flow through the 2 photosystem reaction centers. PSII is a light-driven water plastoquinone oxidoreductase, using light energy to abstract electrons from H(2)O, generating a proton gradient subsequently used for ATP formation.</text>
</comment>
<comment type="subunit">
    <text evidence="1">PSII is composed of 1 copy each of membrane proteins PsbA, PsbB, PsbC, PsbD, PsbE, PsbF, PsbH, PsbI, PsbJ, PsbK, PsbL, PsbM, PsbT, PsbY, PsbZ, Psb30/Ycf12, at least 3 peripheral proteins of the oxygen-evolving complex and a large number of cofactors. It forms dimeric complexes.</text>
</comment>
<comment type="subcellular location">
    <subcellularLocation>
        <location evidence="1">Plastid</location>
        <location evidence="1">Chloroplast thylakoid membrane</location>
        <topology evidence="1">Multi-pass membrane protein</topology>
    </subcellularLocation>
</comment>
<comment type="similarity">
    <text evidence="1">Belongs to the PsbZ family.</text>
</comment>
<organism>
    <name type="scientific">Nymphaea alba</name>
    <name type="common">White water-lily</name>
    <name type="synonym">Castalia alba</name>
    <dbReference type="NCBI Taxonomy" id="34301"/>
    <lineage>
        <taxon>Eukaryota</taxon>
        <taxon>Viridiplantae</taxon>
        <taxon>Streptophyta</taxon>
        <taxon>Embryophyta</taxon>
        <taxon>Tracheophyta</taxon>
        <taxon>Spermatophyta</taxon>
        <taxon>Magnoliopsida</taxon>
        <taxon>Nymphaeales</taxon>
        <taxon>Nymphaeaceae</taxon>
        <taxon>Nymphaea</taxon>
    </lineage>
</organism>
<evidence type="ECO:0000255" key="1">
    <source>
        <dbReference type="HAMAP-Rule" id="MF_00644"/>
    </source>
</evidence>
<protein>
    <recommendedName>
        <fullName evidence="1">Photosystem II reaction center protein Z</fullName>
        <shortName evidence="1">PSII-Z</shortName>
    </recommendedName>
</protein>
<sequence>MTIAFQLAVFALIATSSILLISVPVVFASPDGWSSKKNVVFSGTSLWIGLVFLVGILNSLIY</sequence>
<reference key="1">
    <citation type="journal article" date="2004" name="Mol. Biol. Evol.">
        <title>The chloroplast genome of Nymphaea alba: whole-genome analyses and the problem of identifying the most basal angiosperm.</title>
        <authorList>
            <person name="Goremykin V.V."/>
            <person name="Hirsch-Ernst K.I."/>
            <person name="Woelfl S."/>
            <person name="Hellwig F.H."/>
        </authorList>
    </citation>
    <scope>NUCLEOTIDE SEQUENCE [LARGE SCALE GENOMIC DNA]</scope>
</reference>
<dbReference type="EMBL" id="AJ627251">
    <property type="protein sequence ID" value="CAF28590.1"/>
    <property type="molecule type" value="Genomic_DNA"/>
</dbReference>
<dbReference type="RefSeq" id="YP_053152.1">
    <property type="nucleotide sequence ID" value="NC_006050.1"/>
</dbReference>
<dbReference type="SMR" id="Q6EW51"/>
<dbReference type="GeneID" id="2896177"/>
<dbReference type="GO" id="GO:0009535">
    <property type="term" value="C:chloroplast thylakoid membrane"/>
    <property type="evidence" value="ECO:0007669"/>
    <property type="project" value="UniProtKB-SubCell"/>
</dbReference>
<dbReference type="GO" id="GO:0009539">
    <property type="term" value="C:photosystem II reaction center"/>
    <property type="evidence" value="ECO:0007669"/>
    <property type="project" value="InterPro"/>
</dbReference>
<dbReference type="GO" id="GO:0015979">
    <property type="term" value="P:photosynthesis"/>
    <property type="evidence" value="ECO:0007669"/>
    <property type="project" value="UniProtKB-UniRule"/>
</dbReference>
<dbReference type="GO" id="GO:0042549">
    <property type="term" value="P:photosystem II stabilization"/>
    <property type="evidence" value="ECO:0007669"/>
    <property type="project" value="InterPro"/>
</dbReference>
<dbReference type="FunFam" id="1.10.287.740:FF:000001">
    <property type="entry name" value="Photosystem II reaction center protein Z"/>
    <property type="match status" value="1"/>
</dbReference>
<dbReference type="Gene3D" id="1.10.287.740">
    <property type="entry name" value="Photosystem II PsbZ, reaction centre"/>
    <property type="match status" value="1"/>
</dbReference>
<dbReference type="HAMAP" id="MF_00644">
    <property type="entry name" value="PSII_PsbZ"/>
    <property type="match status" value="1"/>
</dbReference>
<dbReference type="InterPro" id="IPR002644">
    <property type="entry name" value="PSII_PsbZ"/>
</dbReference>
<dbReference type="InterPro" id="IPR036512">
    <property type="entry name" value="PSII_PsbZ_sf"/>
</dbReference>
<dbReference type="NCBIfam" id="TIGR03043">
    <property type="entry name" value="PS_II_psbZ"/>
    <property type="match status" value="1"/>
</dbReference>
<dbReference type="PANTHER" id="PTHR34971">
    <property type="entry name" value="PHOTOSYSTEM II REACTION CENTER PROTEIN Z"/>
    <property type="match status" value="1"/>
</dbReference>
<dbReference type="PANTHER" id="PTHR34971:SF2">
    <property type="entry name" value="PHOTOSYSTEM II REACTION CENTER PROTEIN Z"/>
    <property type="match status" value="1"/>
</dbReference>
<dbReference type="Pfam" id="PF01737">
    <property type="entry name" value="Ycf9"/>
    <property type="match status" value="1"/>
</dbReference>
<dbReference type="SUPFAM" id="SSF161055">
    <property type="entry name" value="PsbZ-like"/>
    <property type="match status" value="1"/>
</dbReference>
<geneLocation type="chloroplast"/>
<accession>Q6EW51</accession>
<name>PSBZ_NYMAL</name>
<keyword id="KW-0150">Chloroplast</keyword>
<keyword id="KW-0472">Membrane</keyword>
<keyword id="KW-0602">Photosynthesis</keyword>
<keyword id="KW-0604">Photosystem II</keyword>
<keyword id="KW-0934">Plastid</keyword>
<keyword id="KW-0674">Reaction center</keyword>
<keyword id="KW-0793">Thylakoid</keyword>
<keyword id="KW-0812">Transmembrane</keyword>
<keyword id="KW-1133">Transmembrane helix</keyword>
<proteinExistence type="inferred from homology"/>
<gene>
    <name evidence="1" type="primary">psbZ</name>
    <name type="synonym">lhbA</name>
</gene>
<feature type="chain" id="PRO_0000217716" description="Photosystem II reaction center protein Z">
    <location>
        <begin position="1"/>
        <end position="62"/>
    </location>
</feature>
<feature type="transmembrane region" description="Helical" evidence="1">
    <location>
        <begin position="8"/>
        <end position="28"/>
    </location>
</feature>
<feature type="transmembrane region" description="Helical" evidence="1">
    <location>
        <begin position="41"/>
        <end position="61"/>
    </location>
</feature>